<evidence type="ECO:0000255" key="1">
    <source>
        <dbReference type="HAMAP-Rule" id="MF_00377"/>
    </source>
</evidence>
<accession>Q6YRL3</accession>
<dbReference type="EMBL" id="AP006628">
    <property type="protein sequence ID" value="BAD04086.1"/>
    <property type="molecule type" value="Genomic_DNA"/>
</dbReference>
<dbReference type="SMR" id="Q6YRL3"/>
<dbReference type="STRING" id="262768.PAM_001"/>
<dbReference type="KEGG" id="poy:PAM_001"/>
<dbReference type="eggNOG" id="COG0593">
    <property type="taxonomic scope" value="Bacteria"/>
</dbReference>
<dbReference type="HOGENOM" id="CLU_026910_3_2_14"/>
<dbReference type="BioCyc" id="OYEL262768:G1G26-1-MONOMER"/>
<dbReference type="Proteomes" id="UP000002523">
    <property type="component" value="Chromosome"/>
</dbReference>
<dbReference type="GO" id="GO:0005737">
    <property type="term" value="C:cytoplasm"/>
    <property type="evidence" value="ECO:0007669"/>
    <property type="project" value="UniProtKB-SubCell"/>
</dbReference>
<dbReference type="GO" id="GO:0005886">
    <property type="term" value="C:plasma membrane"/>
    <property type="evidence" value="ECO:0007669"/>
    <property type="project" value="TreeGrafter"/>
</dbReference>
<dbReference type="GO" id="GO:0005524">
    <property type="term" value="F:ATP binding"/>
    <property type="evidence" value="ECO:0007669"/>
    <property type="project" value="UniProtKB-UniRule"/>
</dbReference>
<dbReference type="GO" id="GO:0016887">
    <property type="term" value="F:ATP hydrolysis activity"/>
    <property type="evidence" value="ECO:0007669"/>
    <property type="project" value="InterPro"/>
</dbReference>
<dbReference type="GO" id="GO:0003688">
    <property type="term" value="F:DNA replication origin binding"/>
    <property type="evidence" value="ECO:0007669"/>
    <property type="project" value="UniProtKB-UniRule"/>
</dbReference>
<dbReference type="GO" id="GO:0008289">
    <property type="term" value="F:lipid binding"/>
    <property type="evidence" value="ECO:0007669"/>
    <property type="project" value="UniProtKB-KW"/>
</dbReference>
<dbReference type="GO" id="GO:0006270">
    <property type="term" value="P:DNA replication initiation"/>
    <property type="evidence" value="ECO:0007669"/>
    <property type="project" value="UniProtKB-UniRule"/>
</dbReference>
<dbReference type="GO" id="GO:0006275">
    <property type="term" value="P:regulation of DNA replication"/>
    <property type="evidence" value="ECO:0007669"/>
    <property type="project" value="UniProtKB-UniRule"/>
</dbReference>
<dbReference type="CDD" id="cd00009">
    <property type="entry name" value="AAA"/>
    <property type="match status" value="1"/>
</dbReference>
<dbReference type="CDD" id="cd06571">
    <property type="entry name" value="Bac_DnaA_C"/>
    <property type="match status" value="1"/>
</dbReference>
<dbReference type="FunFam" id="3.40.50.300:FF:000668">
    <property type="entry name" value="Chromosomal replication initiator protein DnaA"/>
    <property type="match status" value="1"/>
</dbReference>
<dbReference type="Gene3D" id="1.10.1750.10">
    <property type="match status" value="1"/>
</dbReference>
<dbReference type="Gene3D" id="1.10.8.60">
    <property type="match status" value="1"/>
</dbReference>
<dbReference type="Gene3D" id="3.30.300.180">
    <property type="match status" value="1"/>
</dbReference>
<dbReference type="Gene3D" id="3.40.50.300">
    <property type="entry name" value="P-loop containing nucleotide triphosphate hydrolases"/>
    <property type="match status" value="1"/>
</dbReference>
<dbReference type="HAMAP" id="MF_00377">
    <property type="entry name" value="DnaA_bact"/>
    <property type="match status" value="1"/>
</dbReference>
<dbReference type="InterPro" id="IPR003593">
    <property type="entry name" value="AAA+_ATPase"/>
</dbReference>
<dbReference type="InterPro" id="IPR001957">
    <property type="entry name" value="Chromosome_initiator_DnaA"/>
</dbReference>
<dbReference type="InterPro" id="IPR020591">
    <property type="entry name" value="Chromosome_initiator_DnaA-like"/>
</dbReference>
<dbReference type="InterPro" id="IPR013159">
    <property type="entry name" value="DnaA_C"/>
</dbReference>
<dbReference type="InterPro" id="IPR013317">
    <property type="entry name" value="DnaA_dom"/>
</dbReference>
<dbReference type="InterPro" id="IPR024633">
    <property type="entry name" value="DnaA_N_dom"/>
</dbReference>
<dbReference type="InterPro" id="IPR038454">
    <property type="entry name" value="DnaA_N_sf"/>
</dbReference>
<dbReference type="InterPro" id="IPR027417">
    <property type="entry name" value="P-loop_NTPase"/>
</dbReference>
<dbReference type="InterPro" id="IPR010921">
    <property type="entry name" value="Trp_repressor/repl_initiator"/>
</dbReference>
<dbReference type="NCBIfam" id="TIGR00362">
    <property type="entry name" value="DnaA"/>
    <property type="match status" value="1"/>
</dbReference>
<dbReference type="PANTHER" id="PTHR30050">
    <property type="entry name" value="CHROMOSOMAL REPLICATION INITIATOR PROTEIN DNAA"/>
    <property type="match status" value="1"/>
</dbReference>
<dbReference type="PANTHER" id="PTHR30050:SF2">
    <property type="entry name" value="CHROMOSOMAL REPLICATION INITIATOR PROTEIN DNAA"/>
    <property type="match status" value="1"/>
</dbReference>
<dbReference type="Pfam" id="PF00308">
    <property type="entry name" value="Bac_DnaA"/>
    <property type="match status" value="1"/>
</dbReference>
<dbReference type="Pfam" id="PF08299">
    <property type="entry name" value="Bac_DnaA_C"/>
    <property type="match status" value="1"/>
</dbReference>
<dbReference type="Pfam" id="PF11638">
    <property type="entry name" value="DnaA_N"/>
    <property type="match status" value="1"/>
</dbReference>
<dbReference type="PRINTS" id="PR00051">
    <property type="entry name" value="DNAA"/>
</dbReference>
<dbReference type="SMART" id="SM00382">
    <property type="entry name" value="AAA"/>
    <property type="match status" value="1"/>
</dbReference>
<dbReference type="SMART" id="SM00760">
    <property type="entry name" value="Bac_DnaA_C"/>
    <property type="match status" value="1"/>
</dbReference>
<dbReference type="SUPFAM" id="SSF52540">
    <property type="entry name" value="P-loop containing nucleoside triphosphate hydrolases"/>
    <property type="match status" value="1"/>
</dbReference>
<dbReference type="SUPFAM" id="SSF48295">
    <property type="entry name" value="TrpR-like"/>
    <property type="match status" value="1"/>
</dbReference>
<protein>
    <recommendedName>
        <fullName evidence="1">Chromosomal replication initiator protein DnaA</fullName>
    </recommendedName>
</protein>
<name>DNAA_ONYPE</name>
<reference key="1">
    <citation type="journal article" date="2004" name="Nat. Genet.">
        <title>Reductive evolution suggested from the complete genome sequence of a plant-pathogenic phytoplasma.</title>
        <authorList>
            <person name="Oshima K."/>
            <person name="Kakizawa S."/>
            <person name="Nishigawa H."/>
            <person name="Jung H.-Y."/>
            <person name="Wei W."/>
            <person name="Suzuki S."/>
            <person name="Arashida R."/>
            <person name="Nakata D."/>
            <person name="Miyata S."/>
            <person name="Ugaki M."/>
            <person name="Namba S."/>
        </authorList>
    </citation>
    <scope>NUCLEOTIDE SEQUENCE [LARGE SCALE GENOMIC DNA]</scope>
    <source>
        <strain>OY-M</strain>
    </source>
</reference>
<gene>
    <name evidence="1" type="primary">dnaA</name>
    <name type="ordered locus">PAM_001</name>
</gene>
<comment type="function">
    <text evidence="1">Plays an essential role in the initiation and regulation of chromosomal replication. ATP-DnaA binds to the origin of replication (oriC) to initiate formation of the DNA replication initiation complex once per cell cycle. Binds the DnaA box (a 9 base pair repeat at the origin) and separates the double-stranded (ds)DNA. Forms a right-handed helical filament on oriC DNA; dsDNA binds to the exterior of the filament while single-stranded (ss)DNA is stabiized in the filament's interior. The ATP-DnaA-oriC complex binds and stabilizes one strand of the AT-rich DNA unwinding element (DUE), permitting loading of DNA polymerase. After initiation quickly degrades to an ADP-DnaA complex that is not apt for DNA replication. Binds acidic phospholipids.</text>
</comment>
<comment type="subunit">
    <text evidence="1">Oligomerizes as a right-handed, spiral filament on DNA at oriC.</text>
</comment>
<comment type="subcellular location">
    <subcellularLocation>
        <location evidence="1">Cytoplasm</location>
    </subcellularLocation>
</comment>
<comment type="domain">
    <text evidence="1">Domain I is involved in oligomerization and binding regulators, domain II is flexibile and of varying length in different bacteria, domain III forms the AAA+ region, while domain IV binds dsDNA.</text>
</comment>
<comment type="similarity">
    <text evidence="1">Belongs to the DnaA family.</text>
</comment>
<feature type="chain" id="PRO_0000114225" description="Chromosomal replication initiator protein DnaA">
    <location>
        <begin position="1"/>
        <end position="507"/>
    </location>
</feature>
<feature type="region of interest" description="Domain I, interacts with DnaA modulators" evidence="1">
    <location>
        <begin position="1"/>
        <end position="72"/>
    </location>
</feature>
<feature type="region of interest" description="Domain II" evidence="1">
    <location>
        <begin position="72"/>
        <end position="162"/>
    </location>
</feature>
<feature type="region of interest" description="Domain III, AAA+ region" evidence="1">
    <location>
        <begin position="163"/>
        <end position="384"/>
    </location>
</feature>
<feature type="region of interest" description="Domain IV, binds dsDNA" evidence="1">
    <location>
        <begin position="385"/>
        <end position="507"/>
    </location>
</feature>
<feature type="binding site" evidence="1">
    <location>
        <position position="207"/>
    </location>
    <ligand>
        <name>ATP</name>
        <dbReference type="ChEBI" id="CHEBI:30616"/>
    </ligand>
</feature>
<feature type="binding site" evidence="1">
    <location>
        <position position="209"/>
    </location>
    <ligand>
        <name>ATP</name>
        <dbReference type="ChEBI" id="CHEBI:30616"/>
    </ligand>
</feature>
<feature type="binding site" evidence="1">
    <location>
        <position position="210"/>
    </location>
    <ligand>
        <name>ATP</name>
        <dbReference type="ChEBI" id="CHEBI:30616"/>
    </ligand>
</feature>
<feature type="binding site" evidence="1">
    <location>
        <position position="211"/>
    </location>
    <ligand>
        <name>ATP</name>
        <dbReference type="ChEBI" id="CHEBI:30616"/>
    </ligand>
</feature>
<keyword id="KW-0067">ATP-binding</keyword>
<keyword id="KW-0963">Cytoplasm</keyword>
<keyword id="KW-0235">DNA replication</keyword>
<keyword id="KW-0238">DNA-binding</keyword>
<keyword id="KW-0446">Lipid-binding</keyword>
<keyword id="KW-0547">Nucleotide-binding</keyword>
<sequence>MNNYNKIWEIILNELSKIYSDEVFKETFSNIKKINQIEEKIIISVETEFIKNKIYKMYFEKIKKITKLKFEEKIIIEFVSEKNKKNSNFDDEKKHFENLKEKLENENQTYFSKIENNENNDEFQNNKYFETIEKEQIETKTDNDKNVEIENRKISFNKYNYGNTNPKYSFDNFVVGKSNNFAFKIAKKIAEEKKVTTNPLYIFGKAGIGKTHLIQAIGNHILKKTHSSKKVLYVKADGFIEEFTNQLRKAKMEDFNEKYRDIDLLLVDDIQIMAGATRTQMEFFKLFDYLYLNQKQIVITSDKQASELKNIMSRLTSRFEAGLMVDIQSPDFNHRLNILKKKILEFEPQNPLKIKKDVLDLIASSFVNNVREMEGALLRLLNYAQTFGYDIDINIANEALELLIKSKKSVSYDEDVLEKIKSVVSNFFNISVRDLMSKKRQQKYTLPRHIAMYLIKELKDIPYNIVGSFFKRNHSAVFKAYQKIKKNSQSDYELKKSLELILKKINS</sequence>
<proteinExistence type="inferred from homology"/>
<organism>
    <name type="scientific">Onion yellows phytoplasma (strain OY-M)</name>
    <dbReference type="NCBI Taxonomy" id="262768"/>
    <lineage>
        <taxon>Bacteria</taxon>
        <taxon>Bacillati</taxon>
        <taxon>Mycoplasmatota</taxon>
        <taxon>Mollicutes</taxon>
        <taxon>Acholeplasmatales</taxon>
        <taxon>Acholeplasmataceae</taxon>
        <taxon>Candidatus Phytoplasma</taxon>
        <taxon>16SrI (Aster yellows group)</taxon>
    </lineage>
</organism>